<gene>
    <name evidence="1" type="primary">hslO</name>
    <name type="ordered locus">Asuc_0222</name>
</gene>
<protein>
    <recommendedName>
        <fullName evidence="1">33 kDa chaperonin</fullName>
    </recommendedName>
    <alternativeName>
        <fullName evidence="1">Heat shock protein 33 homolog</fullName>
        <shortName evidence="1">HSP33</shortName>
    </alternativeName>
</protein>
<feature type="chain" id="PRO_1000071356" description="33 kDa chaperonin">
    <location>
        <begin position="1"/>
        <end position="288"/>
    </location>
</feature>
<feature type="disulfide bond" description="Redox-active" evidence="1">
    <location>
        <begin position="233"/>
        <end position="235"/>
    </location>
</feature>
<feature type="disulfide bond" description="Redox-active" evidence="1">
    <location>
        <begin position="267"/>
        <end position="270"/>
    </location>
</feature>
<dbReference type="EMBL" id="CP000746">
    <property type="protein sequence ID" value="ABR73602.1"/>
    <property type="molecule type" value="Genomic_DNA"/>
</dbReference>
<dbReference type="RefSeq" id="WP_011978878.1">
    <property type="nucleotide sequence ID" value="NC_009655.1"/>
</dbReference>
<dbReference type="SMR" id="A6VKV5"/>
<dbReference type="STRING" id="339671.Asuc_0222"/>
<dbReference type="KEGG" id="asu:Asuc_0222"/>
<dbReference type="eggNOG" id="COG1281">
    <property type="taxonomic scope" value="Bacteria"/>
</dbReference>
<dbReference type="HOGENOM" id="CLU_054493_0_0_6"/>
<dbReference type="OrthoDB" id="9793753at2"/>
<dbReference type="Proteomes" id="UP000001114">
    <property type="component" value="Chromosome"/>
</dbReference>
<dbReference type="GO" id="GO:0005737">
    <property type="term" value="C:cytoplasm"/>
    <property type="evidence" value="ECO:0007669"/>
    <property type="project" value="UniProtKB-SubCell"/>
</dbReference>
<dbReference type="GO" id="GO:0044183">
    <property type="term" value="F:protein folding chaperone"/>
    <property type="evidence" value="ECO:0007669"/>
    <property type="project" value="TreeGrafter"/>
</dbReference>
<dbReference type="GO" id="GO:0051082">
    <property type="term" value="F:unfolded protein binding"/>
    <property type="evidence" value="ECO:0007669"/>
    <property type="project" value="UniProtKB-UniRule"/>
</dbReference>
<dbReference type="GO" id="GO:0042026">
    <property type="term" value="P:protein refolding"/>
    <property type="evidence" value="ECO:0007669"/>
    <property type="project" value="TreeGrafter"/>
</dbReference>
<dbReference type="CDD" id="cd00498">
    <property type="entry name" value="Hsp33"/>
    <property type="match status" value="1"/>
</dbReference>
<dbReference type="Gene3D" id="1.10.287.480">
    <property type="entry name" value="helix hairpin bin"/>
    <property type="match status" value="1"/>
</dbReference>
<dbReference type="Gene3D" id="3.55.30.10">
    <property type="entry name" value="Hsp33 domain"/>
    <property type="match status" value="1"/>
</dbReference>
<dbReference type="Gene3D" id="3.90.1280.10">
    <property type="entry name" value="HSP33 redox switch-like"/>
    <property type="match status" value="1"/>
</dbReference>
<dbReference type="HAMAP" id="MF_00117">
    <property type="entry name" value="HslO"/>
    <property type="match status" value="1"/>
</dbReference>
<dbReference type="InterPro" id="IPR000397">
    <property type="entry name" value="Heat_shock_Hsp33"/>
</dbReference>
<dbReference type="InterPro" id="IPR016154">
    <property type="entry name" value="Heat_shock_Hsp33_C"/>
</dbReference>
<dbReference type="InterPro" id="IPR016153">
    <property type="entry name" value="Heat_shock_Hsp33_N"/>
</dbReference>
<dbReference type="InterPro" id="IPR023212">
    <property type="entry name" value="Hsp33_helix_hairpin_bin_dom_sf"/>
</dbReference>
<dbReference type="NCBIfam" id="NF001033">
    <property type="entry name" value="PRK00114.1"/>
    <property type="match status" value="1"/>
</dbReference>
<dbReference type="PANTHER" id="PTHR30111">
    <property type="entry name" value="33 KDA CHAPERONIN"/>
    <property type="match status" value="1"/>
</dbReference>
<dbReference type="PANTHER" id="PTHR30111:SF1">
    <property type="entry name" value="33 KDA CHAPERONIN"/>
    <property type="match status" value="1"/>
</dbReference>
<dbReference type="Pfam" id="PF01430">
    <property type="entry name" value="HSP33"/>
    <property type="match status" value="1"/>
</dbReference>
<dbReference type="PIRSF" id="PIRSF005261">
    <property type="entry name" value="Heat_shock_Hsp33"/>
    <property type="match status" value="1"/>
</dbReference>
<dbReference type="SUPFAM" id="SSF64397">
    <property type="entry name" value="Hsp33 domain"/>
    <property type="match status" value="1"/>
</dbReference>
<dbReference type="SUPFAM" id="SSF118352">
    <property type="entry name" value="HSP33 redox switch-like"/>
    <property type="match status" value="1"/>
</dbReference>
<sequence>MTYQQDNDKLYRYLFQNRAVRGEWVRMNKSFSETLNTHHYPIAVQNLLGEMMVATGLLTATLKFTGHITVQIQGDGPLKLALVNGTDSQQIRALARLQGEISDDMTLHQMIGKGVLVITIAPEEGERYQGVVTLDKPTITECLEEYFERSEQLKTQLIIRTGEFNGEPVAAGMLLQVMPDGSGSPDDFEHLAALTATVKDDEIFGLTAEEMLYRLYHEEQVEIYAPQAVTFHCGCSAERSGAALLLISDAELDEILAEHNGSIDMQCECCGTHYFFNRDAIDKLKMQQ</sequence>
<accession>A6VKV5</accession>
<organism>
    <name type="scientific">Actinobacillus succinogenes (strain ATCC 55618 / DSM 22257 / CCUG 43843 / 130Z)</name>
    <dbReference type="NCBI Taxonomy" id="339671"/>
    <lineage>
        <taxon>Bacteria</taxon>
        <taxon>Pseudomonadati</taxon>
        <taxon>Pseudomonadota</taxon>
        <taxon>Gammaproteobacteria</taxon>
        <taxon>Pasteurellales</taxon>
        <taxon>Pasteurellaceae</taxon>
        <taxon>Actinobacillus</taxon>
    </lineage>
</organism>
<comment type="function">
    <text evidence="1">Redox regulated molecular chaperone. Protects both thermally unfolding and oxidatively damaged proteins from irreversible aggregation. Plays an important role in the bacterial defense system toward oxidative stress.</text>
</comment>
<comment type="subcellular location">
    <subcellularLocation>
        <location evidence="1">Cytoplasm</location>
    </subcellularLocation>
</comment>
<comment type="PTM">
    <text evidence="1">Under oxidizing conditions two disulfide bonds are formed involving the reactive cysteines. Under reducing conditions zinc is bound to the reactive cysteines and the protein is inactive.</text>
</comment>
<comment type="similarity">
    <text evidence="1">Belongs to the HSP33 family.</text>
</comment>
<proteinExistence type="inferred from homology"/>
<reference key="1">
    <citation type="journal article" date="2010" name="BMC Genomics">
        <title>A genomic perspective on the potential of Actinobacillus succinogenes for industrial succinate production.</title>
        <authorList>
            <person name="McKinlay J.B."/>
            <person name="Laivenieks M."/>
            <person name="Schindler B.D."/>
            <person name="McKinlay A.A."/>
            <person name="Siddaramappa S."/>
            <person name="Challacombe J.F."/>
            <person name="Lowry S.R."/>
            <person name="Clum A."/>
            <person name="Lapidus A.L."/>
            <person name="Burkhart K.B."/>
            <person name="Harkins V."/>
            <person name="Vieille C."/>
        </authorList>
    </citation>
    <scope>NUCLEOTIDE SEQUENCE [LARGE SCALE GENOMIC DNA]</scope>
    <source>
        <strain>ATCC 55618 / DSM 22257 / CCUG 43843 / 130Z</strain>
    </source>
</reference>
<evidence type="ECO:0000255" key="1">
    <source>
        <dbReference type="HAMAP-Rule" id="MF_00117"/>
    </source>
</evidence>
<name>HSLO_ACTSZ</name>
<keyword id="KW-0143">Chaperone</keyword>
<keyword id="KW-0963">Cytoplasm</keyword>
<keyword id="KW-1015">Disulfide bond</keyword>
<keyword id="KW-0676">Redox-active center</keyword>
<keyword id="KW-1185">Reference proteome</keyword>
<keyword id="KW-0862">Zinc</keyword>